<sequence>MLSIAHKIFGSTNSRIIKSFHKVVQDINAIEHEIQLLSNEALKHKTIEFKEELKNGKTLDDILVPAFAVVREASKRVLNMRHFDVQLIGGIVLHKGMISEMKTGEGKTLVATLAAYLNALEGKGVHIVTVNDYLAKRDAEWMGELYSALGITVGCILTETNDLERKNAYNCDILYSTNNNLGFDYLRDNMKFSRDEMVQRGFNYAIVDEVDSILIDEARTPLIISGQVDQDIKMYKKIDNLIYELAEEDYELEEKNRNIFLTEAGITKIENLLIQHNLISSNTSLYDIDNIIIMHYITQALRAHKMFAVDKDYIIKDGNIVIIDEFTGRMMDGRRYSDGLHQALEAKEKLNINSENQTLASTTFQNYFRMYTKLSGMTGTAETESEEFLGIYNLQVVQIPTNIPVQRIDLNDDIYCTEEEKFNSVIKFISECHKKLQPVLVGTVSIEKSEMLSKLLTKNKLKHSVLNARYHEQEAYIIAQAGIPGTITIATNMAGRGTDIQLGGNLKMLAKTALANITDKEAIEIKYKQLTEKVNRDKEIAIQAGGLCVIGTERHESRRIDNQLRGRSGRQGDPGLSKFFLSLEDDLLRIFGSDKIKGVLQKLGMKKDEAIQHTWISRSIEKAQHKVESRNYDIRKSLLKFDNVINEQRKVVFDQRNKILDSDSYDISIIYRDLNSDIVNSIIHDKYYNLDDDTYKALSSEFTRIYNITLDYSTISNFESKDKVLEHLNETVDEHFAQKIEEFTLKDQKAWDHVVKKVMIMSLDYLWRDHLAALDSLKCGINLRSIAQKDPLNEFKAEAFSMLENMMSKFYELIIQRLSHLKFDIELNDTQRIEYNIHHSKISRNEKCPCGSGKKFKHCHGA</sequence>
<feature type="chain" id="PRO_0000320796" description="Protein translocase subunit SecA">
    <location>
        <begin position="1"/>
        <end position="862"/>
    </location>
</feature>
<feature type="binding site" evidence="1">
    <location>
        <position position="86"/>
    </location>
    <ligand>
        <name>ATP</name>
        <dbReference type="ChEBI" id="CHEBI:30616"/>
    </ligand>
</feature>
<feature type="binding site" evidence="1">
    <location>
        <begin position="104"/>
        <end position="108"/>
    </location>
    <ligand>
        <name>ATP</name>
        <dbReference type="ChEBI" id="CHEBI:30616"/>
    </ligand>
</feature>
<feature type="binding site" evidence="1">
    <location>
        <position position="499"/>
    </location>
    <ligand>
        <name>ATP</name>
        <dbReference type="ChEBI" id="CHEBI:30616"/>
    </ligand>
</feature>
<feature type="binding site" evidence="1">
    <location>
        <position position="848"/>
    </location>
    <ligand>
        <name>Zn(2+)</name>
        <dbReference type="ChEBI" id="CHEBI:29105"/>
    </ligand>
</feature>
<feature type="binding site" evidence="1">
    <location>
        <position position="850"/>
    </location>
    <ligand>
        <name>Zn(2+)</name>
        <dbReference type="ChEBI" id="CHEBI:29105"/>
    </ligand>
</feature>
<feature type="binding site" evidence="1">
    <location>
        <position position="859"/>
    </location>
    <ligand>
        <name>Zn(2+)</name>
        <dbReference type="ChEBI" id="CHEBI:29105"/>
    </ligand>
</feature>
<feature type="binding site" evidence="1">
    <location>
        <position position="860"/>
    </location>
    <ligand>
        <name>Zn(2+)</name>
        <dbReference type="ChEBI" id="CHEBI:29105"/>
    </ligand>
</feature>
<keyword id="KW-0067">ATP-binding</keyword>
<keyword id="KW-0997">Cell inner membrane</keyword>
<keyword id="KW-1003">Cell membrane</keyword>
<keyword id="KW-0963">Cytoplasm</keyword>
<keyword id="KW-0472">Membrane</keyword>
<keyword id="KW-0479">Metal-binding</keyword>
<keyword id="KW-0547">Nucleotide-binding</keyword>
<keyword id="KW-0653">Protein transport</keyword>
<keyword id="KW-1185">Reference proteome</keyword>
<keyword id="KW-1278">Translocase</keyword>
<keyword id="KW-0811">Translocation</keyword>
<keyword id="KW-0813">Transport</keyword>
<keyword id="KW-0862">Zinc</keyword>
<name>SECA_EHRCR</name>
<dbReference type="EC" id="7.4.2.8" evidence="1"/>
<dbReference type="EMBL" id="CP000236">
    <property type="protein sequence ID" value="ABD45253.1"/>
    <property type="molecule type" value="Genomic_DNA"/>
</dbReference>
<dbReference type="RefSeq" id="WP_006010644.1">
    <property type="nucleotide sequence ID" value="NC_007799.1"/>
</dbReference>
<dbReference type="SMR" id="Q2GF50"/>
<dbReference type="STRING" id="205920.ECH_1149"/>
<dbReference type="KEGG" id="ech:ECH_1149"/>
<dbReference type="eggNOG" id="COG0653">
    <property type="taxonomic scope" value="Bacteria"/>
</dbReference>
<dbReference type="HOGENOM" id="CLU_005314_3_0_5"/>
<dbReference type="OrthoDB" id="9805579at2"/>
<dbReference type="Proteomes" id="UP000008320">
    <property type="component" value="Chromosome"/>
</dbReference>
<dbReference type="GO" id="GO:0031522">
    <property type="term" value="C:cell envelope Sec protein transport complex"/>
    <property type="evidence" value="ECO:0007669"/>
    <property type="project" value="TreeGrafter"/>
</dbReference>
<dbReference type="GO" id="GO:0005829">
    <property type="term" value="C:cytosol"/>
    <property type="evidence" value="ECO:0007669"/>
    <property type="project" value="TreeGrafter"/>
</dbReference>
<dbReference type="GO" id="GO:0005886">
    <property type="term" value="C:plasma membrane"/>
    <property type="evidence" value="ECO:0007669"/>
    <property type="project" value="UniProtKB-SubCell"/>
</dbReference>
<dbReference type="GO" id="GO:0005524">
    <property type="term" value="F:ATP binding"/>
    <property type="evidence" value="ECO:0007669"/>
    <property type="project" value="UniProtKB-UniRule"/>
</dbReference>
<dbReference type="GO" id="GO:0046872">
    <property type="term" value="F:metal ion binding"/>
    <property type="evidence" value="ECO:0007669"/>
    <property type="project" value="UniProtKB-KW"/>
</dbReference>
<dbReference type="GO" id="GO:0008564">
    <property type="term" value="F:protein-exporting ATPase activity"/>
    <property type="evidence" value="ECO:0007669"/>
    <property type="project" value="UniProtKB-EC"/>
</dbReference>
<dbReference type="GO" id="GO:0065002">
    <property type="term" value="P:intracellular protein transmembrane transport"/>
    <property type="evidence" value="ECO:0007669"/>
    <property type="project" value="UniProtKB-UniRule"/>
</dbReference>
<dbReference type="GO" id="GO:0017038">
    <property type="term" value="P:protein import"/>
    <property type="evidence" value="ECO:0007669"/>
    <property type="project" value="InterPro"/>
</dbReference>
<dbReference type="GO" id="GO:0006605">
    <property type="term" value="P:protein targeting"/>
    <property type="evidence" value="ECO:0007669"/>
    <property type="project" value="UniProtKB-UniRule"/>
</dbReference>
<dbReference type="GO" id="GO:0043952">
    <property type="term" value="P:protein transport by the Sec complex"/>
    <property type="evidence" value="ECO:0007669"/>
    <property type="project" value="TreeGrafter"/>
</dbReference>
<dbReference type="CDD" id="cd17928">
    <property type="entry name" value="DEXDc_SecA"/>
    <property type="match status" value="1"/>
</dbReference>
<dbReference type="CDD" id="cd18803">
    <property type="entry name" value="SF2_C_secA"/>
    <property type="match status" value="1"/>
</dbReference>
<dbReference type="FunFam" id="3.40.50.300:FF:000113">
    <property type="entry name" value="Preprotein translocase subunit SecA"/>
    <property type="match status" value="1"/>
</dbReference>
<dbReference type="FunFam" id="3.90.1440.10:FF:000001">
    <property type="entry name" value="Preprotein translocase subunit SecA"/>
    <property type="match status" value="1"/>
</dbReference>
<dbReference type="FunFam" id="3.40.50.300:FF:000334">
    <property type="entry name" value="Protein translocase subunit SecA"/>
    <property type="match status" value="1"/>
</dbReference>
<dbReference type="Gene3D" id="1.10.3060.10">
    <property type="entry name" value="Helical scaffold and wing domains of SecA"/>
    <property type="match status" value="1"/>
</dbReference>
<dbReference type="Gene3D" id="3.40.50.300">
    <property type="entry name" value="P-loop containing nucleotide triphosphate hydrolases"/>
    <property type="match status" value="2"/>
</dbReference>
<dbReference type="Gene3D" id="3.90.1440.10">
    <property type="entry name" value="SecA, preprotein cross-linking domain"/>
    <property type="match status" value="1"/>
</dbReference>
<dbReference type="HAMAP" id="MF_01382">
    <property type="entry name" value="SecA"/>
    <property type="match status" value="1"/>
</dbReference>
<dbReference type="InterPro" id="IPR014001">
    <property type="entry name" value="Helicase_ATP-bd"/>
</dbReference>
<dbReference type="InterPro" id="IPR001650">
    <property type="entry name" value="Helicase_C-like"/>
</dbReference>
<dbReference type="InterPro" id="IPR027417">
    <property type="entry name" value="P-loop_NTPase"/>
</dbReference>
<dbReference type="InterPro" id="IPR004027">
    <property type="entry name" value="SEC_C_motif"/>
</dbReference>
<dbReference type="InterPro" id="IPR000185">
    <property type="entry name" value="SecA"/>
</dbReference>
<dbReference type="InterPro" id="IPR020937">
    <property type="entry name" value="SecA_CS"/>
</dbReference>
<dbReference type="InterPro" id="IPR011115">
    <property type="entry name" value="SecA_DEAD"/>
</dbReference>
<dbReference type="InterPro" id="IPR014018">
    <property type="entry name" value="SecA_motor_DEAD"/>
</dbReference>
<dbReference type="InterPro" id="IPR011130">
    <property type="entry name" value="SecA_preprotein_X-link_dom"/>
</dbReference>
<dbReference type="InterPro" id="IPR044722">
    <property type="entry name" value="SecA_SF2_C"/>
</dbReference>
<dbReference type="InterPro" id="IPR011116">
    <property type="entry name" value="SecA_Wing/Scaffold"/>
</dbReference>
<dbReference type="InterPro" id="IPR036266">
    <property type="entry name" value="SecA_Wing/Scaffold_sf"/>
</dbReference>
<dbReference type="InterPro" id="IPR036670">
    <property type="entry name" value="SecA_X-link_sf"/>
</dbReference>
<dbReference type="NCBIfam" id="NF009538">
    <property type="entry name" value="PRK12904.1"/>
    <property type="match status" value="1"/>
</dbReference>
<dbReference type="NCBIfam" id="TIGR00963">
    <property type="entry name" value="secA"/>
    <property type="match status" value="1"/>
</dbReference>
<dbReference type="PANTHER" id="PTHR30612:SF0">
    <property type="entry name" value="CHLOROPLAST PROTEIN-TRANSPORTING ATPASE"/>
    <property type="match status" value="1"/>
</dbReference>
<dbReference type="PANTHER" id="PTHR30612">
    <property type="entry name" value="SECA INNER MEMBRANE COMPONENT OF SEC PROTEIN SECRETION SYSTEM"/>
    <property type="match status" value="1"/>
</dbReference>
<dbReference type="Pfam" id="PF21090">
    <property type="entry name" value="P-loop_SecA"/>
    <property type="match status" value="1"/>
</dbReference>
<dbReference type="Pfam" id="PF02810">
    <property type="entry name" value="SEC-C"/>
    <property type="match status" value="1"/>
</dbReference>
<dbReference type="Pfam" id="PF07517">
    <property type="entry name" value="SecA_DEAD"/>
    <property type="match status" value="1"/>
</dbReference>
<dbReference type="Pfam" id="PF01043">
    <property type="entry name" value="SecA_PP_bind"/>
    <property type="match status" value="1"/>
</dbReference>
<dbReference type="Pfam" id="PF07516">
    <property type="entry name" value="SecA_SW"/>
    <property type="match status" value="1"/>
</dbReference>
<dbReference type="PRINTS" id="PR00906">
    <property type="entry name" value="SECA"/>
</dbReference>
<dbReference type="SMART" id="SM00957">
    <property type="entry name" value="SecA_DEAD"/>
    <property type="match status" value="1"/>
</dbReference>
<dbReference type="SMART" id="SM00958">
    <property type="entry name" value="SecA_PP_bind"/>
    <property type="match status" value="1"/>
</dbReference>
<dbReference type="SUPFAM" id="SSF81886">
    <property type="entry name" value="Helical scaffold and wing domains of SecA"/>
    <property type="match status" value="1"/>
</dbReference>
<dbReference type="SUPFAM" id="SSF52540">
    <property type="entry name" value="P-loop containing nucleoside triphosphate hydrolases"/>
    <property type="match status" value="2"/>
</dbReference>
<dbReference type="SUPFAM" id="SSF81767">
    <property type="entry name" value="Pre-protein crosslinking domain of SecA"/>
    <property type="match status" value="1"/>
</dbReference>
<dbReference type="PROSITE" id="PS01312">
    <property type="entry name" value="SECA"/>
    <property type="match status" value="1"/>
</dbReference>
<dbReference type="PROSITE" id="PS51196">
    <property type="entry name" value="SECA_MOTOR_DEAD"/>
    <property type="match status" value="1"/>
</dbReference>
<reference key="1">
    <citation type="journal article" date="2006" name="PLoS Genet.">
        <title>Comparative genomics of emerging human ehrlichiosis agents.</title>
        <authorList>
            <person name="Dunning Hotopp J.C."/>
            <person name="Lin M."/>
            <person name="Madupu R."/>
            <person name="Crabtree J."/>
            <person name="Angiuoli S.V."/>
            <person name="Eisen J.A."/>
            <person name="Seshadri R."/>
            <person name="Ren Q."/>
            <person name="Wu M."/>
            <person name="Utterback T.R."/>
            <person name="Smith S."/>
            <person name="Lewis M."/>
            <person name="Khouri H."/>
            <person name="Zhang C."/>
            <person name="Niu H."/>
            <person name="Lin Q."/>
            <person name="Ohashi N."/>
            <person name="Zhi N."/>
            <person name="Nelson W.C."/>
            <person name="Brinkac L.M."/>
            <person name="Dodson R.J."/>
            <person name="Rosovitz M.J."/>
            <person name="Sundaram J.P."/>
            <person name="Daugherty S.C."/>
            <person name="Davidsen T."/>
            <person name="Durkin A.S."/>
            <person name="Gwinn M.L."/>
            <person name="Haft D.H."/>
            <person name="Selengut J.D."/>
            <person name="Sullivan S.A."/>
            <person name="Zafar N."/>
            <person name="Zhou L."/>
            <person name="Benahmed F."/>
            <person name="Forberger H."/>
            <person name="Halpin R."/>
            <person name="Mulligan S."/>
            <person name="Robinson J."/>
            <person name="White O."/>
            <person name="Rikihisa Y."/>
            <person name="Tettelin H."/>
        </authorList>
    </citation>
    <scope>NUCLEOTIDE SEQUENCE [LARGE SCALE GENOMIC DNA]</scope>
    <source>
        <strain>ATCC CRL-10679 / Arkansas</strain>
    </source>
</reference>
<organism>
    <name type="scientific">Ehrlichia chaffeensis (strain ATCC CRL-10679 / Arkansas)</name>
    <dbReference type="NCBI Taxonomy" id="205920"/>
    <lineage>
        <taxon>Bacteria</taxon>
        <taxon>Pseudomonadati</taxon>
        <taxon>Pseudomonadota</taxon>
        <taxon>Alphaproteobacteria</taxon>
        <taxon>Rickettsiales</taxon>
        <taxon>Anaplasmataceae</taxon>
        <taxon>Ehrlichia</taxon>
    </lineage>
</organism>
<evidence type="ECO:0000255" key="1">
    <source>
        <dbReference type="HAMAP-Rule" id="MF_01382"/>
    </source>
</evidence>
<accession>Q2GF50</accession>
<protein>
    <recommendedName>
        <fullName evidence="1">Protein translocase subunit SecA</fullName>
        <ecNumber evidence="1">7.4.2.8</ecNumber>
    </recommendedName>
</protein>
<gene>
    <name evidence="1" type="primary">secA</name>
    <name type="ordered locus">ECH_1149</name>
</gene>
<proteinExistence type="inferred from homology"/>
<comment type="function">
    <text evidence="1">Part of the Sec protein translocase complex. Interacts with the SecYEG preprotein conducting channel. Has a central role in coupling the hydrolysis of ATP to the transfer of proteins into and across the cell membrane, serving both as a receptor for the preprotein-SecB complex and as an ATP-driven molecular motor driving the stepwise translocation of polypeptide chains across the membrane.</text>
</comment>
<comment type="catalytic activity">
    <reaction evidence="1">
        <text>ATP + H2O + cellular proteinSide 1 = ADP + phosphate + cellular proteinSide 2.</text>
        <dbReference type="EC" id="7.4.2.8"/>
    </reaction>
</comment>
<comment type="cofactor">
    <cofactor evidence="1">
        <name>Zn(2+)</name>
        <dbReference type="ChEBI" id="CHEBI:29105"/>
    </cofactor>
    <text evidence="1">May bind 1 zinc ion per subunit.</text>
</comment>
<comment type="subunit">
    <text evidence="1">Monomer and homodimer. Part of the essential Sec protein translocation apparatus which comprises SecA, SecYEG and auxiliary proteins SecDF-YajC and YidC.</text>
</comment>
<comment type="subcellular location">
    <subcellularLocation>
        <location evidence="1">Cell inner membrane</location>
        <topology evidence="1">Peripheral membrane protein</topology>
        <orientation evidence="1">Cytoplasmic side</orientation>
    </subcellularLocation>
    <subcellularLocation>
        <location evidence="1">Cytoplasm</location>
    </subcellularLocation>
    <text evidence="1">Distribution is 50-50.</text>
</comment>
<comment type="similarity">
    <text evidence="1">Belongs to the SecA family.</text>
</comment>